<dbReference type="EMBL" id="D10706">
    <property type="protein sequence ID" value="BAA01549.1"/>
    <property type="molecule type" value="mRNA"/>
</dbReference>
<dbReference type="EMBL" id="D10706">
    <property type="protein sequence ID" value="BAA01550.1"/>
    <property type="molecule type" value="mRNA"/>
</dbReference>
<dbReference type="EMBL" id="D10706">
    <property type="protein sequence ID" value="BAA01551.1"/>
    <property type="molecule type" value="mRNA"/>
</dbReference>
<dbReference type="PIR" id="A55472">
    <property type="entry name" value="A55472"/>
</dbReference>
<dbReference type="RefSeq" id="NP_620781.1">
    <molecule id="P54370-1"/>
    <property type="nucleotide sequence ID" value="NM_139081.2"/>
</dbReference>
<dbReference type="PDB" id="1ZO0">
    <property type="method" value="NMR"/>
    <property type="chains" value="A=94-219"/>
</dbReference>
<dbReference type="PDBsum" id="1ZO0"/>
<dbReference type="SMR" id="P54370"/>
<dbReference type="BioGRID" id="247534">
    <property type="interactions" value="1"/>
</dbReference>
<dbReference type="FunCoup" id="P54370">
    <property type="interactions" value="2020"/>
</dbReference>
<dbReference type="STRING" id="10116.ENSRNOP00000026341"/>
<dbReference type="PhosphoSitePlus" id="P54370"/>
<dbReference type="PaxDb" id="10116-ENSRNOP00000026341"/>
<dbReference type="GeneID" id="25502"/>
<dbReference type="KEGG" id="rno:25502"/>
<dbReference type="UCSC" id="RGD:3219">
    <molecule id="P54370-1"/>
    <property type="organism name" value="rat"/>
</dbReference>
<dbReference type="AGR" id="RGD:3219"/>
<dbReference type="CTD" id="4946"/>
<dbReference type="RGD" id="3219">
    <property type="gene designation" value="Oaz1"/>
</dbReference>
<dbReference type="eggNOG" id="KOG4387">
    <property type="taxonomic scope" value="Eukaryota"/>
</dbReference>
<dbReference type="InParanoid" id="P54370"/>
<dbReference type="OrthoDB" id="5959761at2759"/>
<dbReference type="PhylomeDB" id="P54370"/>
<dbReference type="Reactome" id="R-RNO-350562">
    <property type="pathway name" value="Regulation of ornithine decarboxylase (ODC)"/>
</dbReference>
<dbReference type="EvolutionaryTrace" id="P54370"/>
<dbReference type="PRO" id="PR:P54370"/>
<dbReference type="Proteomes" id="UP000002494">
    <property type="component" value="Unplaced"/>
</dbReference>
<dbReference type="GO" id="GO:0005737">
    <property type="term" value="C:cytoplasm"/>
    <property type="evidence" value="ECO:0000314"/>
    <property type="project" value="RGD"/>
</dbReference>
<dbReference type="GO" id="GO:0005634">
    <property type="term" value="C:nucleus"/>
    <property type="evidence" value="ECO:0000314"/>
    <property type="project" value="RGD"/>
</dbReference>
<dbReference type="GO" id="GO:0019899">
    <property type="term" value="F:enzyme binding"/>
    <property type="evidence" value="ECO:0000314"/>
    <property type="project" value="RGD"/>
</dbReference>
<dbReference type="GO" id="GO:0008073">
    <property type="term" value="F:ornithine decarboxylase inhibitor activity"/>
    <property type="evidence" value="ECO:0000314"/>
    <property type="project" value="RGD"/>
</dbReference>
<dbReference type="GO" id="GO:0044877">
    <property type="term" value="F:protein-containing complex binding"/>
    <property type="evidence" value="ECO:0000314"/>
    <property type="project" value="RGD"/>
</dbReference>
<dbReference type="GO" id="GO:0072750">
    <property type="term" value="P:cellular response to leptomycin B"/>
    <property type="evidence" value="ECO:0000314"/>
    <property type="project" value="RGD"/>
</dbReference>
<dbReference type="GO" id="GO:0090650">
    <property type="term" value="P:cellular response to oxygen-glucose deprivation"/>
    <property type="evidence" value="ECO:0000270"/>
    <property type="project" value="RGD"/>
</dbReference>
<dbReference type="GO" id="GO:1904584">
    <property type="term" value="P:cellular response to polyamine macromolecule"/>
    <property type="evidence" value="ECO:0000314"/>
    <property type="project" value="RGD"/>
</dbReference>
<dbReference type="GO" id="GO:1903267">
    <property type="term" value="P:negative regulation of ornithine catabolic process"/>
    <property type="evidence" value="ECO:0000314"/>
    <property type="project" value="RGD"/>
</dbReference>
<dbReference type="GO" id="GO:1902268">
    <property type="term" value="P:negative regulation of polyamine transmembrane transport"/>
    <property type="evidence" value="ECO:0000315"/>
    <property type="project" value="RGD"/>
</dbReference>
<dbReference type="GO" id="GO:0006596">
    <property type="term" value="P:polyamine biosynthetic process"/>
    <property type="evidence" value="ECO:0007669"/>
    <property type="project" value="UniProtKB-KW"/>
</dbReference>
<dbReference type="GO" id="GO:0090316">
    <property type="term" value="P:positive regulation of intracellular protein transport"/>
    <property type="evidence" value="ECO:0000250"/>
    <property type="project" value="UniProtKB"/>
</dbReference>
<dbReference type="GO" id="GO:1901800">
    <property type="term" value="P:positive regulation of proteasomal protein catabolic process"/>
    <property type="evidence" value="ECO:0000314"/>
    <property type="project" value="RGD"/>
</dbReference>
<dbReference type="GO" id="GO:0045732">
    <property type="term" value="P:positive regulation of protein catabolic process"/>
    <property type="evidence" value="ECO:0000250"/>
    <property type="project" value="UniProtKB"/>
</dbReference>
<dbReference type="GO" id="GO:0002931">
    <property type="term" value="P:response to ischemia"/>
    <property type="evidence" value="ECO:0000270"/>
    <property type="project" value="RGD"/>
</dbReference>
<dbReference type="GO" id="GO:0075523">
    <property type="term" value="P:viral translational frameshifting"/>
    <property type="evidence" value="ECO:0007669"/>
    <property type="project" value="UniProtKB-KW"/>
</dbReference>
<dbReference type="FunFam" id="3.40.630.60:FF:000001">
    <property type="entry name" value="Ornithine decarboxylase antizyme 1"/>
    <property type="match status" value="1"/>
</dbReference>
<dbReference type="Gene3D" id="3.40.630.60">
    <property type="match status" value="1"/>
</dbReference>
<dbReference type="InterPro" id="IPR016181">
    <property type="entry name" value="Acyl_CoA_acyltransferase"/>
</dbReference>
<dbReference type="InterPro" id="IPR002993">
    <property type="entry name" value="ODC_AZ"/>
</dbReference>
<dbReference type="InterPro" id="IPR038581">
    <property type="entry name" value="ODC_AZ_sf"/>
</dbReference>
<dbReference type="PANTHER" id="PTHR10279">
    <property type="entry name" value="ORNITHINE DECARBOXYLASE ANTIZYME"/>
    <property type="match status" value="1"/>
</dbReference>
<dbReference type="PANTHER" id="PTHR10279:SF8">
    <property type="entry name" value="ORNITHINE DECARBOXYLASE ANTIZYME 1"/>
    <property type="match status" value="1"/>
</dbReference>
<dbReference type="Pfam" id="PF02100">
    <property type="entry name" value="ODC_AZ"/>
    <property type="match status" value="1"/>
</dbReference>
<dbReference type="SUPFAM" id="SSF55729">
    <property type="entry name" value="Acyl-CoA N-acyltransferases (Nat)"/>
    <property type="match status" value="1"/>
</dbReference>
<dbReference type="PROSITE" id="PS01337">
    <property type="entry name" value="ODC_AZ"/>
    <property type="match status" value="1"/>
</dbReference>
<name>OAZ1_RAT</name>
<sequence>MVKSSLQRILNSHCFAREKEGDKRSATLHASRTMPLLSQHSRGGCSSESSRVALHCCSNLGPGPRWCSDVPHPPLKIPGGRGNSQRDHSLSASILYSDERLNVTEEPTSNDKTRVLSIQCTLTEAKQVTWRAVWNGGGLYIELPAGPLPEGSKDSFAALLEFAEEQLRADHVFICFPKNREDRAALLRTFSFLGFEIVRPGHPLVPKRPDACFMVYTLEREDPGEED</sequence>
<gene>
    <name type="primary">Oaz1</name>
    <name type="synonym">Oaz</name>
</gene>
<comment type="function">
    <text evidence="1 3">Ornithine decarboxylase (ODC) antizyme protein that negatively regulates ODC activity and intracellular polyamine biosynthesis and uptake in response to increased intracellular polyamine levels. Binds to ODC monomers, inhibiting the assembly of the functional ODC homodimer, and targets the monomers for ubiquitin-independent proteolytic destruction by the 26S proteasome. Triggers ODC degradation by inducing the exposure of a cryptic proteasome-interacting surface of ODC. Stabilizes AZIN2 by interfering with its ubiquitination (By similarity). Also inhibits cellular uptake of polyamines by inactivating the polyamine uptake transporter (PubMed:8166639). SMAD1/OAZ1/PSMB4 complex mediates the degradation of the CREBBP/EP300 repressor SNIP1. Involved in the translocation of AZIN2 from ER-Golgi intermediate compartment (ERGIC) to the cytosol (By similarity).</text>
</comment>
<comment type="subunit">
    <text evidence="1">Interacts with ODC1 and thereby sterically blocks ODC homodimerization. Forms a ternary complex with PSMB4 and OAZ1 before PSMB4 is incorporated into the 20S proteasome. Interacts with AZIN2; this interaction disrupts the interaction between the antizyme and ODC1. Interacts with FAM171A1 (By similarity).</text>
</comment>
<comment type="alternative products">
    <event type="ribosomal frameshifting"/>
    <isoform>
        <id>P54370-1</id>
        <name>1</name>
        <sequence type="displayed"/>
    </isoform>
    <text evidence="2">A ribosomal frameshift occurs between the codons for Ser-68 and Asp-69. An autoregulatory mechanism enables modulation of frameshifting according to the cellular concentration of polyamines.</text>
</comment>
<comment type="induction">
    <text evidence="2">Induced by a ribosomal frameshifting mechanism in response to increased levels of intracellular polyamines.</text>
</comment>
<comment type="similarity">
    <text evidence="4">Belongs to the ODC antizyme family.</text>
</comment>
<reference key="1">
    <citation type="journal article" date="1995" name="Cell">
        <title>Autoregulatory frameshifting in decoding mammalian ornithine decarboxylase antizyme.</title>
        <authorList>
            <person name="Matsufuji S."/>
            <person name="Matsufuji T."/>
            <person name="Miyazaki Y."/>
            <person name="Murakami Y."/>
            <person name="Atkins J.F."/>
            <person name="Gesteland R.F."/>
            <person name="Hayashi S."/>
        </authorList>
    </citation>
    <scope>NUCLEOTIDE SEQUENCE [MRNA]</scope>
    <scope>PROTEIN SEQUENCE OF 2-12; 35-45 AND 66-78</scope>
    <source>
        <strain>Sprague-Dawley</strain>
        <tissue>Liver</tissue>
    </source>
</reference>
<reference key="2">
    <citation type="journal article" date="1994" name="Biochem. J.">
        <title>Feedback repression of polyamine transport is mediated by antizyme in mammalian tissue-culture cells.</title>
        <authorList>
            <person name="Mitchell J.L."/>
            <person name="Judd G.G."/>
            <person name="Bareyal-Leyser A."/>
            <person name="Ling S.Y."/>
        </authorList>
    </citation>
    <scope>FUNCTION IN INHIBITION OF POLYAMINE UPTAKE</scope>
</reference>
<reference key="3">
    <citation type="journal article" date="2005" name="Biochemistry">
        <title>Solution structure of a conserved domain of antizyme: a protein regulator of polyamines.</title>
        <authorList>
            <person name="Hoffman D.W."/>
            <person name="Carroll D."/>
            <person name="Martinez N."/>
            <person name="Hackert M.L."/>
        </authorList>
    </citation>
    <scope>STRUCTURE BY NMR OF 94-218</scope>
</reference>
<accession>P54370</accession>
<proteinExistence type="evidence at protein level"/>
<evidence type="ECO:0000250" key="1">
    <source>
        <dbReference type="UniProtKB" id="P54368"/>
    </source>
</evidence>
<evidence type="ECO:0000269" key="2">
    <source>
    </source>
</evidence>
<evidence type="ECO:0000269" key="3">
    <source>
    </source>
</evidence>
<evidence type="ECO:0000305" key="4"/>
<evidence type="ECO:0007829" key="5">
    <source>
        <dbReference type="PDB" id="1ZO0"/>
    </source>
</evidence>
<protein>
    <recommendedName>
        <fullName>Ornithine decarboxylase antizyme 1</fullName>
        <shortName>ODC-Az</shortName>
    </recommendedName>
</protein>
<keyword id="KW-0002">3D-structure</keyword>
<keyword id="KW-0903">Direct protein sequencing</keyword>
<keyword id="KW-0620">Polyamine biosynthesis</keyword>
<keyword id="KW-1185">Reference proteome</keyword>
<keyword id="KW-0688">Ribosomal frameshifting</keyword>
<keyword id="KW-0813">Transport</keyword>
<organism>
    <name type="scientific">Rattus norvegicus</name>
    <name type="common">Rat</name>
    <dbReference type="NCBI Taxonomy" id="10116"/>
    <lineage>
        <taxon>Eukaryota</taxon>
        <taxon>Metazoa</taxon>
        <taxon>Chordata</taxon>
        <taxon>Craniata</taxon>
        <taxon>Vertebrata</taxon>
        <taxon>Euteleostomi</taxon>
        <taxon>Mammalia</taxon>
        <taxon>Eutheria</taxon>
        <taxon>Euarchontoglires</taxon>
        <taxon>Glires</taxon>
        <taxon>Rodentia</taxon>
        <taxon>Myomorpha</taxon>
        <taxon>Muroidea</taxon>
        <taxon>Muridae</taxon>
        <taxon>Murinae</taxon>
        <taxon>Rattus</taxon>
    </lineage>
</organism>
<feature type="initiator methionine" description="Removed" evidence="2">
    <location>
        <position position="1"/>
    </location>
</feature>
<feature type="chain" id="PRO_0000220852" description="Ornithine decarboxylase antizyme 1">
    <location>
        <begin position="2"/>
        <end position="227"/>
    </location>
</feature>
<feature type="strand" evidence="5">
    <location>
        <begin position="95"/>
        <end position="97"/>
    </location>
</feature>
<feature type="strand" evidence="5">
    <location>
        <begin position="99"/>
        <end position="106"/>
    </location>
</feature>
<feature type="strand" evidence="5">
    <location>
        <begin position="114"/>
        <end position="120"/>
    </location>
</feature>
<feature type="strand" evidence="5">
    <location>
        <begin position="128"/>
        <end position="135"/>
    </location>
</feature>
<feature type="strand" evidence="5">
    <location>
        <begin position="138"/>
        <end position="142"/>
    </location>
</feature>
<feature type="helix" evidence="5">
    <location>
        <begin position="154"/>
        <end position="167"/>
    </location>
</feature>
<feature type="strand" evidence="5">
    <location>
        <begin position="172"/>
        <end position="176"/>
    </location>
</feature>
<feature type="helix" evidence="5">
    <location>
        <begin position="183"/>
        <end position="190"/>
    </location>
</feature>
<feature type="turn" evidence="5">
    <location>
        <begin position="191"/>
        <end position="193"/>
    </location>
</feature>
<feature type="strand" evidence="5">
    <location>
        <begin position="196"/>
        <end position="198"/>
    </location>
</feature>
<feature type="strand" evidence="5">
    <location>
        <begin position="212"/>
        <end position="216"/>
    </location>
</feature>